<protein>
    <recommendedName>
        <fullName evidence="1">3-isopropylmalate dehydratase small subunit</fullName>
        <ecNumber evidence="1">4.2.1.33</ecNumber>
    </recommendedName>
    <alternativeName>
        <fullName evidence="1">Alpha-IPM isomerase</fullName>
        <shortName evidence="1">IPMI</shortName>
    </alternativeName>
    <alternativeName>
        <fullName evidence="1">Isopropylmalate isomerase</fullName>
    </alternativeName>
</protein>
<dbReference type="EC" id="4.2.1.33" evidence="1"/>
<dbReference type="EMBL" id="CP000377">
    <property type="protein sequence ID" value="ABF65241.1"/>
    <property type="molecule type" value="Genomic_DNA"/>
</dbReference>
<dbReference type="RefSeq" id="WP_011539828.1">
    <property type="nucleotide sequence ID" value="NC_008044.1"/>
</dbReference>
<dbReference type="SMR" id="Q1GDM5"/>
<dbReference type="STRING" id="292414.TM1040_2509"/>
<dbReference type="KEGG" id="sit:TM1040_2509"/>
<dbReference type="eggNOG" id="COG0066">
    <property type="taxonomic scope" value="Bacteria"/>
</dbReference>
<dbReference type="HOGENOM" id="CLU_081378_0_3_5"/>
<dbReference type="OrthoDB" id="9777465at2"/>
<dbReference type="UniPathway" id="UPA00048">
    <property type="reaction ID" value="UER00071"/>
</dbReference>
<dbReference type="Proteomes" id="UP000000636">
    <property type="component" value="Chromosome"/>
</dbReference>
<dbReference type="GO" id="GO:0009316">
    <property type="term" value="C:3-isopropylmalate dehydratase complex"/>
    <property type="evidence" value="ECO:0007669"/>
    <property type="project" value="InterPro"/>
</dbReference>
<dbReference type="GO" id="GO:0003861">
    <property type="term" value="F:3-isopropylmalate dehydratase activity"/>
    <property type="evidence" value="ECO:0007669"/>
    <property type="project" value="UniProtKB-UniRule"/>
</dbReference>
<dbReference type="GO" id="GO:0009098">
    <property type="term" value="P:L-leucine biosynthetic process"/>
    <property type="evidence" value="ECO:0007669"/>
    <property type="project" value="UniProtKB-UniRule"/>
</dbReference>
<dbReference type="CDD" id="cd01577">
    <property type="entry name" value="IPMI_Swivel"/>
    <property type="match status" value="1"/>
</dbReference>
<dbReference type="FunFam" id="3.20.19.10:FF:000003">
    <property type="entry name" value="3-isopropylmalate dehydratase small subunit"/>
    <property type="match status" value="1"/>
</dbReference>
<dbReference type="Gene3D" id="3.20.19.10">
    <property type="entry name" value="Aconitase, domain 4"/>
    <property type="match status" value="1"/>
</dbReference>
<dbReference type="HAMAP" id="MF_01031">
    <property type="entry name" value="LeuD_type1"/>
    <property type="match status" value="1"/>
</dbReference>
<dbReference type="InterPro" id="IPR004431">
    <property type="entry name" value="3-IsopropMal_deHydase_ssu"/>
</dbReference>
<dbReference type="InterPro" id="IPR015928">
    <property type="entry name" value="Aconitase/3IPM_dehydase_swvl"/>
</dbReference>
<dbReference type="InterPro" id="IPR000573">
    <property type="entry name" value="AconitaseA/IPMdHydase_ssu_swvl"/>
</dbReference>
<dbReference type="InterPro" id="IPR033940">
    <property type="entry name" value="IPMI_Swivel"/>
</dbReference>
<dbReference type="InterPro" id="IPR050075">
    <property type="entry name" value="LeuD"/>
</dbReference>
<dbReference type="NCBIfam" id="TIGR00171">
    <property type="entry name" value="leuD"/>
    <property type="match status" value="1"/>
</dbReference>
<dbReference type="NCBIfam" id="NF002458">
    <property type="entry name" value="PRK01641.1"/>
    <property type="match status" value="1"/>
</dbReference>
<dbReference type="PANTHER" id="PTHR43345:SF5">
    <property type="entry name" value="3-ISOPROPYLMALATE DEHYDRATASE SMALL SUBUNIT"/>
    <property type="match status" value="1"/>
</dbReference>
<dbReference type="PANTHER" id="PTHR43345">
    <property type="entry name" value="3-ISOPROPYLMALATE DEHYDRATASE SMALL SUBUNIT 2-RELATED-RELATED"/>
    <property type="match status" value="1"/>
</dbReference>
<dbReference type="Pfam" id="PF00694">
    <property type="entry name" value="Aconitase_C"/>
    <property type="match status" value="1"/>
</dbReference>
<dbReference type="SUPFAM" id="SSF52016">
    <property type="entry name" value="LeuD/IlvD-like"/>
    <property type="match status" value="1"/>
</dbReference>
<gene>
    <name evidence="1" type="primary">leuD</name>
    <name type="ordered locus">TM1040_2509</name>
</gene>
<name>LEUD_RUEST</name>
<comment type="function">
    <text evidence="1">Catalyzes the isomerization between 2-isopropylmalate and 3-isopropylmalate, via the formation of 2-isopropylmaleate.</text>
</comment>
<comment type="catalytic activity">
    <reaction evidence="1">
        <text>(2R,3S)-3-isopropylmalate = (2S)-2-isopropylmalate</text>
        <dbReference type="Rhea" id="RHEA:32287"/>
        <dbReference type="ChEBI" id="CHEBI:1178"/>
        <dbReference type="ChEBI" id="CHEBI:35121"/>
        <dbReference type="EC" id="4.2.1.33"/>
    </reaction>
</comment>
<comment type="pathway">
    <text evidence="1">Amino-acid biosynthesis; L-leucine biosynthesis; L-leucine from 3-methyl-2-oxobutanoate: step 2/4.</text>
</comment>
<comment type="subunit">
    <text evidence="1">Heterodimer of LeuC and LeuD.</text>
</comment>
<comment type="similarity">
    <text evidence="1">Belongs to the LeuD family. LeuD type 1 subfamily.</text>
</comment>
<evidence type="ECO:0000255" key="1">
    <source>
        <dbReference type="HAMAP-Rule" id="MF_01031"/>
    </source>
</evidence>
<sequence length="201" mass="22534">MEKFETFTGIAAPMPLVNIDTDMIIPKQFLKTIKRSGLGVHAFDEMRYDRQGNEVPDFVLNKPAYRESSILVAGDNFGCGSSREHAPWALADFGIKVVISTSFADIFFNNCFKNGMLPIVLPQEQVDLLMKDAEKGENARMTVDLEAQEITTSEGDVIKFDVDPFRKHCLINGLDDIGLTLEKADAIKAYEERAAQERPWV</sequence>
<proteinExistence type="inferred from homology"/>
<accession>Q1GDM5</accession>
<organism>
    <name type="scientific">Ruegeria sp. (strain TM1040)</name>
    <name type="common">Silicibacter sp.</name>
    <dbReference type="NCBI Taxonomy" id="292414"/>
    <lineage>
        <taxon>Bacteria</taxon>
        <taxon>Pseudomonadati</taxon>
        <taxon>Pseudomonadota</taxon>
        <taxon>Alphaproteobacteria</taxon>
        <taxon>Rhodobacterales</taxon>
        <taxon>Roseobacteraceae</taxon>
        <taxon>Ruegeria</taxon>
    </lineage>
</organism>
<reference key="1">
    <citation type="submission" date="2006-05" db="EMBL/GenBank/DDBJ databases">
        <title>Complete sequence of chromosome of Silicibacter sp. TM1040.</title>
        <authorList>
            <consortium name="US DOE Joint Genome Institute"/>
            <person name="Copeland A."/>
            <person name="Lucas S."/>
            <person name="Lapidus A."/>
            <person name="Barry K."/>
            <person name="Detter J.C."/>
            <person name="Glavina del Rio T."/>
            <person name="Hammon N."/>
            <person name="Israni S."/>
            <person name="Dalin E."/>
            <person name="Tice H."/>
            <person name="Pitluck S."/>
            <person name="Brettin T."/>
            <person name="Bruce D."/>
            <person name="Han C."/>
            <person name="Tapia R."/>
            <person name="Goodwin L."/>
            <person name="Thompson L.S."/>
            <person name="Gilna P."/>
            <person name="Schmutz J."/>
            <person name="Larimer F."/>
            <person name="Land M."/>
            <person name="Hauser L."/>
            <person name="Kyrpides N."/>
            <person name="Kim E."/>
            <person name="Belas R."/>
            <person name="Moran M.A."/>
            <person name="Buchan A."/>
            <person name="Gonzalez J.M."/>
            <person name="Schell M.A."/>
            <person name="Sun F."/>
            <person name="Richardson P."/>
        </authorList>
    </citation>
    <scope>NUCLEOTIDE SEQUENCE [LARGE SCALE GENOMIC DNA]</scope>
    <source>
        <strain>TM1040</strain>
    </source>
</reference>
<feature type="chain" id="PRO_1000063842" description="3-isopropylmalate dehydratase small subunit">
    <location>
        <begin position="1"/>
        <end position="201"/>
    </location>
</feature>
<keyword id="KW-0028">Amino-acid biosynthesis</keyword>
<keyword id="KW-0100">Branched-chain amino acid biosynthesis</keyword>
<keyword id="KW-0432">Leucine biosynthesis</keyword>
<keyword id="KW-0456">Lyase</keyword>
<keyword id="KW-1185">Reference proteome</keyword>